<protein>
    <recommendedName>
        <fullName>Demethylmacrocin O-methyltransferase</fullName>
        <ecNumber>2.1.1.102</ecNumber>
    </recommendedName>
    <alternativeName>
        <fullName>Tylosin biosynthesis protein E</fullName>
    </alternativeName>
</protein>
<dbReference type="EC" id="2.1.1.102"/>
<dbReference type="EMBL" id="AF055922">
    <property type="protein sequence ID" value="AAD12164.1"/>
    <property type="molecule type" value="Genomic_DNA"/>
</dbReference>
<dbReference type="EMBL" id="AF147703">
    <property type="protein sequence ID" value="AAD41815.1"/>
    <property type="molecule type" value="Genomic_DNA"/>
</dbReference>
<dbReference type="RefSeq" id="WP_043470778.1">
    <property type="nucleotide sequence ID" value="NZ_LGSP01000084.1"/>
</dbReference>
<dbReference type="SMR" id="Q9ZHQ4"/>
<dbReference type="STRING" id="1906.SFRA_26470"/>
<dbReference type="KEGG" id="ag:AAD12164"/>
<dbReference type="eggNOG" id="COG3510">
    <property type="taxonomic scope" value="Bacteria"/>
</dbReference>
<dbReference type="BioCyc" id="MetaCyc:MONOMER-18392"/>
<dbReference type="UniPathway" id="UPA01018"/>
<dbReference type="GO" id="GO:0030770">
    <property type="term" value="F:demethylmacrocin O-methyltransferase activity"/>
    <property type="evidence" value="ECO:0000314"/>
    <property type="project" value="UniProtKB"/>
</dbReference>
<dbReference type="GO" id="GO:0017000">
    <property type="term" value="P:antibiotic biosynthetic process"/>
    <property type="evidence" value="ECO:0000314"/>
    <property type="project" value="UniProtKB"/>
</dbReference>
<dbReference type="GO" id="GO:0032259">
    <property type="term" value="P:methylation"/>
    <property type="evidence" value="ECO:0000314"/>
    <property type="project" value="UniProtKB"/>
</dbReference>
<dbReference type="FunFam" id="3.40.50.150:FF:000651">
    <property type="entry name" value="Mycinamicin VI 2''-O-methyltransferase"/>
    <property type="match status" value="1"/>
</dbReference>
<dbReference type="Gene3D" id="3.30.1050.30">
    <property type="match status" value="1"/>
</dbReference>
<dbReference type="Gene3D" id="3.40.50.150">
    <property type="entry name" value="Vaccinia Virus protein VP39"/>
    <property type="match status" value="1"/>
</dbReference>
<dbReference type="InterPro" id="IPR040800">
    <property type="entry name" value="MycE_N"/>
</dbReference>
<dbReference type="InterPro" id="IPR029063">
    <property type="entry name" value="SAM-dependent_MTases_sf"/>
</dbReference>
<dbReference type="Pfam" id="PF17843">
    <property type="entry name" value="MycE_N"/>
    <property type="match status" value="1"/>
</dbReference>
<dbReference type="SUPFAM" id="SSF53335">
    <property type="entry name" value="S-adenosyl-L-methionine-dependent methyltransferases"/>
    <property type="match status" value="1"/>
</dbReference>
<name>TYLE_STRFR</name>
<feature type="chain" id="PRO_0000418459" description="Demethylmacrocin O-methyltransferase">
    <location>
        <begin position="1"/>
        <end position="395"/>
    </location>
</feature>
<sequence length="395" mass="43233">MAVQKEATLVRQIIRAAGGHAADVRELVAEHGPEAVTAVLVDEIVSRAPHPVNDVPVLVELAVRSGDALVPRRLAVAQGAPVRRAAPDDDGFVAMRVEYELDELVRELFGPCRERAAGTRGTTLFPYATSGTGHIDTYFLAAQQATATVLAGCTSAKPDLNELTSRYLTPKWGSLHWFTPHYDRHFREYRNEEVRVLEIGIGGYQHPEWGGGSLRMWKHFFHRGLIYGLDIEDKSHAEEQRITTVVGDQNDPGCLTELAARYGPFDIVIDDGSHINEHVRTSFHALFPHVRPGGLYVIEDLWTAYWPGFGGDSDPGKSDLTSLGLVKSLVDSLQHQELPEDSGRSPGYADRHVVGLHVYHNLAFIEKGVNSEGGIPGWIPRDFDALVAASSGGAA</sequence>
<organism>
    <name type="scientific">Streptomyces fradiae</name>
    <name type="common">Streptomyces roseoflavus</name>
    <dbReference type="NCBI Taxonomy" id="1906"/>
    <lineage>
        <taxon>Bacteria</taxon>
        <taxon>Bacillati</taxon>
        <taxon>Actinomycetota</taxon>
        <taxon>Actinomycetes</taxon>
        <taxon>Kitasatosporales</taxon>
        <taxon>Streptomycetaceae</taxon>
        <taxon>Streptomyces</taxon>
    </lineage>
</organism>
<gene>
    <name type="primary">tylE</name>
</gene>
<keyword id="KW-0045">Antibiotic biosynthesis</keyword>
<keyword id="KW-0489">Methyltransferase</keyword>
<keyword id="KW-0949">S-adenosyl-L-methionine</keyword>
<keyword id="KW-0808">Transferase</keyword>
<proteinExistence type="evidence at protein level"/>
<comment type="function">
    <text evidence="1 2 3">O-methyltransferase that catalyzes the conversion of demethylmacrocin to macrocin, the penultimate step of tylosin antibiotic biosynthesis. Also able to mediate the conversion of demethyllactenocin to lactenocin.</text>
</comment>
<comment type="catalytic activity">
    <reaction evidence="3">
        <text>demethylmacrocin + S-adenosyl-L-methionine = macrocin + S-adenosyl-L-homocysteine + H(+)</text>
        <dbReference type="Rhea" id="RHEA:17573"/>
        <dbReference type="ChEBI" id="CHEBI:15378"/>
        <dbReference type="ChEBI" id="CHEBI:57856"/>
        <dbReference type="ChEBI" id="CHEBI:59789"/>
        <dbReference type="ChEBI" id="CHEBI:76819"/>
        <dbReference type="ChEBI" id="CHEBI:76820"/>
        <dbReference type="EC" id="2.1.1.102"/>
    </reaction>
</comment>
<comment type="biophysicochemical properties">
    <kinetics>
        <KM evidence="3">6 uM for demethylmacrocin</KM>
        <KM evidence="3">10 uM for demethyllactenocin</KM>
        <KM evidence="3">6 uM for AdoMet</KM>
        <Vmax evidence="3">0.15 umol/min/mg enzyme with demethylmacrocin as substrate</Vmax>
        <Vmax evidence="3">0.14 umol/min/mg enzyme with demethyllactenocin as substrate</Vmax>
    </kinetics>
    <phDependence>
        <text evidence="3">Optimum pH is 7.8-8.5.</text>
    </phDependence>
</comment>
<comment type="pathway">
    <text evidence="2">Antibiotic biosynthesis; tylosin biosynthesis.</text>
</comment>
<comment type="disruption phenotype">
    <text evidence="4">No production of demethylmacrocin.</text>
</comment>
<reference key="1">
    <citation type="journal article" date="1999" name="Microbiology">
        <title>The tylosin biosynthetic cluster from Streptomyces fradiae: genetic organization of the left region.</title>
        <authorList>
            <person name="Fouces R."/>
            <person name="Mellado E."/>
            <person name="Diez B."/>
            <person name="Barredo J.L."/>
        </authorList>
    </citation>
    <scope>NUCLEOTIDE SEQUENCE [GENOMIC DNA]</scope>
    <scope>FUNCTION</scope>
</reference>
<reference key="2">
    <citation type="journal article" date="1999" name="J. Ind. Microbiol. Biotechnol.">
        <title>The mycinose-biosynthetic genes of Streptomyces fradiae, producer of tylosin.</title>
        <authorList>
            <person name="Bate N."/>
            <person name="Cundliffe E."/>
        </authorList>
    </citation>
    <scope>NUCLEOTIDE SEQUENCE [GENOMIC DNA]</scope>
    <scope>FUNCTION</scope>
    <scope>PATHWAY</scope>
    <source>
        <strain>T59235</strain>
    </source>
</reference>
<reference key="3">
    <citation type="journal article" date="1981" name="Antimicrob. Agents Chemother.">
        <title>Properties of S-adenosyl-L-methionine:macrocin O-methyltransferase in extracts of Streptomyces fradiae strains which produce normal or elevated levels of tylosin and in mutants blocked in specific O-methylations.</title>
        <authorList>
            <person name="Seno E.T."/>
            <person name="Baltz R.H."/>
        </authorList>
    </citation>
    <scope>DISRUPTION PHENOTYPE</scope>
</reference>
<reference key="4">
    <citation type="journal article" date="1988" name="J. Biol. Chem.">
        <title>Two distinctive O-methyltransferases catalyzing penultimate and terminal reactions of macrolide antibiotic (tylosin) biosynthesis. Substrate specificity, enzyme inhibition, and kinetic mechanism.</title>
        <authorList>
            <person name="Kreuzman A.J."/>
            <person name="Turner J.R."/>
            <person name="Yeh W.K."/>
        </authorList>
    </citation>
    <scope>FUNCTION</scope>
    <scope>CATALYTIC ACTIVITY</scope>
    <scope>BIOPHYSICOCHEMICAL PROPERTIES</scope>
</reference>
<accession>Q9ZHQ4</accession>
<evidence type="ECO:0000269" key="1">
    <source>
    </source>
</evidence>
<evidence type="ECO:0000269" key="2">
    <source>
    </source>
</evidence>
<evidence type="ECO:0000269" key="3">
    <source>
    </source>
</evidence>
<evidence type="ECO:0000269" key="4">
    <source>
    </source>
</evidence>